<proteinExistence type="inferred from homology"/>
<gene>
    <name evidence="1" type="primary">gcvT</name>
    <name type="ordered locus">SeHA_C3287</name>
</gene>
<feature type="chain" id="PRO_1000114113" description="Aminomethyltransferase">
    <location>
        <begin position="1"/>
        <end position="364"/>
    </location>
</feature>
<reference key="1">
    <citation type="journal article" date="2011" name="J. Bacteriol.">
        <title>Comparative genomics of 28 Salmonella enterica isolates: evidence for CRISPR-mediated adaptive sublineage evolution.</title>
        <authorList>
            <person name="Fricke W.F."/>
            <person name="Mammel M.K."/>
            <person name="McDermott P.F."/>
            <person name="Tartera C."/>
            <person name="White D.G."/>
            <person name="Leclerc J.E."/>
            <person name="Ravel J."/>
            <person name="Cebula T.A."/>
        </authorList>
    </citation>
    <scope>NUCLEOTIDE SEQUENCE [LARGE SCALE GENOMIC DNA]</scope>
    <source>
        <strain>SL476</strain>
    </source>
</reference>
<keyword id="KW-0032">Aminotransferase</keyword>
<keyword id="KW-0808">Transferase</keyword>
<organism>
    <name type="scientific">Salmonella heidelberg (strain SL476)</name>
    <dbReference type="NCBI Taxonomy" id="454169"/>
    <lineage>
        <taxon>Bacteria</taxon>
        <taxon>Pseudomonadati</taxon>
        <taxon>Pseudomonadota</taxon>
        <taxon>Gammaproteobacteria</taxon>
        <taxon>Enterobacterales</taxon>
        <taxon>Enterobacteriaceae</taxon>
        <taxon>Salmonella</taxon>
    </lineage>
</organism>
<comment type="function">
    <text evidence="1">The glycine cleavage system catalyzes the degradation of glycine.</text>
</comment>
<comment type="catalytic activity">
    <reaction evidence="1">
        <text>N(6)-[(R)-S(8)-aminomethyldihydrolipoyl]-L-lysyl-[protein] + (6S)-5,6,7,8-tetrahydrofolate = N(6)-[(R)-dihydrolipoyl]-L-lysyl-[protein] + (6R)-5,10-methylene-5,6,7,8-tetrahydrofolate + NH4(+)</text>
        <dbReference type="Rhea" id="RHEA:16945"/>
        <dbReference type="Rhea" id="RHEA-COMP:10475"/>
        <dbReference type="Rhea" id="RHEA-COMP:10492"/>
        <dbReference type="ChEBI" id="CHEBI:15636"/>
        <dbReference type="ChEBI" id="CHEBI:28938"/>
        <dbReference type="ChEBI" id="CHEBI:57453"/>
        <dbReference type="ChEBI" id="CHEBI:83100"/>
        <dbReference type="ChEBI" id="CHEBI:83143"/>
        <dbReference type="EC" id="2.1.2.10"/>
    </reaction>
</comment>
<comment type="subunit">
    <text evidence="1">The glycine cleavage system is composed of four proteins: P, T, L and H.</text>
</comment>
<comment type="similarity">
    <text evidence="1">Belongs to the GcvT family.</text>
</comment>
<evidence type="ECO:0000255" key="1">
    <source>
        <dbReference type="HAMAP-Rule" id="MF_00259"/>
    </source>
</evidence>
<sequence>MAQQTPLYEQHTLCGARMVDFHGWMMPLHYGSQLDEHHAVRTDAGMFDVSHMTIVDLHGSRTREFLRYLLANDVAKLTKTGKALYSGMLNASGGVIDDLIVYYFTEDFFRLVVNSATREKDLSWITQHAEPYAIDITVRDDLSLIAVQGPNAQEKAATLFTDEQRHAVEGMKPFFGVQAGDLFIATTGYTGEAGYEIAMPNEKAADFWRALVEAGVKPCGLGARDTLRLEAGMNLYGQEMDEGISPLAANMGWTIAWEPADRDFIGREALEMQREKGHEQLVGLVMTEKGVLRNELPVRFTDAQGNQQEGIITSGTFSPTLGYSIALARVPAGIGETAIVQIRNREMPVKVTKPVFVRNGKAVA</sequence>
<accession>B4TGX5</accession>
<protein>
    <recommendedName>
        <fullName evidence="1">Aminomethyltransferase</fullName>
        <ecNumber evidence="1">2.1.2.10</ecNumber>
    </recommendedName>
    <alternativeName>
        <fullName evidence="1">Glycine cleavage system T protein</fullName>
    </alternativeName>
</protein>
<name>GCST_SALHS</name>
<dbReference type="EC" id="2.1.2.10" evidence="1"/>
<dbReference type="EMBL" id="CP001120">
    <property type="protein sequence ID" value="ACF70253.1"/>
    <property type="molecule type" value="Genomic_DNA"/>
</dbReference>
<dbReference type="RefSeq" id="WP_000068733.1">
    <property type="nucleotide sequence ID" value="NC_011083.1"/>
</dbReference>
<dbReference type="SMR" id="B4TGX5"/>
<dbReference type="KEGG" id="seh:SeHA_C3287"/>
<dbReference type="HOGENOM" id="CLU_007884_10_2_6"/>
<dbReference type="Proteomes" id="UP000001866">
    <property type="component" value="Chromosome"/>
</dbReference>
<dbReference type="GO" id="GO:0005829">
    <property type="term" value="C:cytosol"/>
    <property type="evidence" value="ECO:0007669"/>
    <property type="project" value="TreeGrafter"/>
</dbReference>
<dbReference type="GO" id="GO:0005960">
    <property type="term" value="C:glycine cleavage complex"/>
    <property type="evidence" value="ECO:0007669"/>
    <property type="project" value="InterPro"/>
</dbReference>
<dbReference type="GO" id="GO:0004047">
    <property type="term" value="F:aminomethyltransferase activity"/>
    <property type="evidence" value="ECO:0007669"/>
    <property type="project" value="UniProtKB-UniRule"/>
</dbReference>
<dbReference type="GO" id="GO:0008483">
    <property type="term" value="F:transaminase activity"/>
    <property type="evidence" value="ECO:0007669"/>
    <property type="project" value="UniProtKB-KW"/>
</dbReference>
<dbReference type="GO" id="GO:0019464">
    <property type="term" value="P:glycine decarboxylation via glycine cleavage system"/>
    <property type="evidence" value="ECO:0007669"/>
    <property type="project" value="UniProtKB-UniRule"/>
</dbReference>
<dbReference type="FunFam" id="2.40.30.110:FF:000001">
    <property type="entry name" value="Aminomethyltransferase"/>
    <property type="match status" value="1"/>
</dbReference>
<dbReference type="FunFam" id="3.30.70.1400:FF:000001">
    <property type="entry name" value="Aminomethyltransferase"/>
    <property type="match status" value="1"/>
</dbReference>
<dbReference type="FunFam" id="4.10.1250.10:FF:000001">
    <property type="entry name" value="Aminomethyltransferase"/>
    <property type="match status" value="1"/>
</dbReference>
<dbReference type="Gene3D" id="2.40.30.110">
    <property type="entry name" value="Aminomethyltransferase beta-barrel domains"/>
    <property type="match status" value="1"/>
</dbReference>
<dbReference type="Gene3D" id="3.30.70.1400">
    <property type="entry name" value="Aminomethyltransferase beta-barrel domains"/>
    <property type="match status" value="1"/>
</dbReference>
<dbReference type="Gene3D" id="4.10.1250.10">
    <property type="entry name" value="Aminomethyltransferase fragment"/>
    <property type="match status" value="1"/>
</dbReference>
<dbReference type="Gene3D" id="3.30.1360.120">
    <property type="entry name" value="Probable tRNA modification gtpase trme, domain 1"/>
    <property type="match status" value="1"/>
</dbReference>
<dbReference type="HAMAP" id="MF_00259">
    <property type="entry name" value="GcvT"/>
    <property type="match status" value="1"/>
</dbReference>
<dbReference type="InterPro" id="IPR006223">
    <property type="entry name" value="GCS_T"/>
</dbReference>
<dbReference type="InterPro" id="IPR022903">
    <property type="entry name" value="GCS_T_bac"/>
</dbReference>
<dbReference type="InterPro" id="IPR013977">
    <property type="entry name" value="GCST_C"/>
</dbReference>
<dbReference type="InterPro" id="IPR006222">
    <property type="entry name" value="GCV_T_N"/>
</dbReference>
<dbReference type="InterPro" id="IPR028896">
    <property type="entry name" value="GcvT/YgfZ/DmdA"/>
</dbReference>
<dbReference type="InterPro" id="IPR029043">
    <property type="entry name" value="GcvT/YgfZ_C"/>
</dbReference>
<dbReference type="InterPro" id="IPR027266">
    <property type="entry name" value="TrmE/GcvT_dom1"/>
</dbReference>
<dbReference type="NCBIfam" id="TIGR00528">
    <property type="entry name" value="gcvT"/>
    <property type="match status" value="1"/>
</dbReference>
<dbReference type="NCBIfam" id="NF001567">
    <property type="entry name" value="PRK00389.1"/>
    <property type="match status" value="1"/>
</dbReference>
<dbReference type="PANTHER" id="PTHR43757">
    <property type="entry name" value="AMINOMETHYLTRANSFERASE"/>
    <property type="match status" value="1"/>
</dbReference>
<dbReference type="PANTHER" id="PTHR43757:SF2">
    <property type="entry name" value="AMINOMETHYLTRANSFERASE, MITOCHONDRIAL"/>
    <property type="match status" value="1"/>
</dbReference>
<dbReference type="Pfam" id="PF01571">
    <property type="entry name" value="GCV_T"/>
    <property type="match status" value="1"/>
</dbReference>
<dbReference type="Pfam" id="PF08669">
    <property type="entry name" value="GCV_T_C"/>
    <property type="match status" value="1"/>
</dbReference>
<dbReference type="PIRSF" id="PIRSF006487">
    <property type="entry name" value="GcvT"/>
    <property type="match status" value="1"/>
</dbReference>
<dbReference type="SUPFAM" id="SSF101790">
    <property type="entry name" value="Aminomethyltransferase beta-barrel domain"/>
    <property type="match status" value="1"/>
</dbReference>
<dbReference type="SUPFAM" id="SSF103025">
    <property type="entry name" value="Folate-binding domain"/>
    <property type="match status" value="1"/>
</dbReference>